<proteinExistence type="inferred from homology"/>
<gene>
    <name evidence="1" type="primary">rpsT</name>
    <name type="ordered locus">SAR1663</name>
</gene>
<sequence length="83" mass="9021">MANIKSAIKRVKTTEKAEARNISQKSAMRTAVKNAKTAVSNNADNKNELVSLAVKLVDKAAQSNLIHSNKADRIKSQLMTANK</sequence>
<keyword id="KW-0687">Ribonucleoprotein</keyword>
<keyword id="KW-0689">Ribosomal protein</keyword>
<keyword id="KW-0694">RNA-binding</keyword>
<keyword id="KW-0699">rRNA-binding</keyword>
<feature type="chain" id="PRO_0000224947" description="Small ribosomal subunit protein bS20">
    <location>
        <begin position="1"/>
        <end position="83"/>
    </location>
</feature>
<organism>
    <name type="scientific">Staphylococcus aureus (strain MRSA252)</name>
    <dbReference type="NCBI Taxonomy" id="282458"/>
    <lineage>
        <taxon>Bacteria</taxon>
        <taxon>Bacillati</taxon>
        <taxon>Bacillota</taxon>
        <taxon>Bacilli</taxon>
        <taxon>Bacillales</taxon>
        <taxon>Staphylococcaceae</taxon>
        <taxon>Staphylococcus</taxon>
    </lineage>
</organism>
<evidence type="ECO:0000255" key="1">
    <source>
        <dbReference type="HAMAP-Rule" id="MF_00500"/>
    </source>
</evidence>
<evidence type="ECO:0000305" key="2"/>
<accession>Q6GGB5</accession>
<name>RS20_STAAR</name>
<comment type="function">
    <text evidence="1">Binds directly to 16S ribosomal RNA.</text>
</comment>
<comment type="similarity">
    <text evidence="1">Belongs to the bacterial ribosomal protein bS20 family.</text>
</comment>
<dbReference type="EMBL" id="BX571856">
    <property type="protein sequence ID" value="CAG40657.1"/>
    <property type="molecule type" value="Genomic_DNA"/>
</dbReference>
<dbReference type="RefSeq" id="WP_001274017.1">
    <property type="nucleotide sequence ID" value="NC_002952.2"/>
</dbReference>
<dbReference type="SMR" id="Q6GGB5"/>
<dbReference type="GeneID" id="66839775"/>
<dbReference type="KEGG" id="sar:SAR1663"/>
<dbReference type="HOGENOM" id="CLU_160655_1_1_9"/>
<dbReference type="Proteomes" id="UP000000596">
    <property type="component" value="Chromosome"/>
</dbReference>
<dbReference type="GO" id="GO:0005829">
    <property type="term" value="C:cytosol"/>
    <property type="evidence" value="ECO:0007669"/>
    <property type="project" value="TreeGrafter"/>
</dbReference>
<dbReference type="GO" id="GO:0015935">
    <property type="term" value="C:small ribosomal subunit"/>
    <property type="evidence" value="ECO:0007669"/>
    <property type="project" value="TreeGrafter"/>
</dbReference>
<dbReference type="GO" id="GO:0070181">
    <property type="term" value="F:small ribosomal subunit rRNA binding"/>
    <property type="evidence" value="ECO:0007669"/>
    <property type="project" value="TreeGrafter"/>
</dbReference>
<dbReference type="GO" id="GO:0003735">
    <property type="term" value="F:structural constituent of ribosome"/>
    <property type="evidence" value="ECO:0007669"/>
    <property type="project" value="InterPro"/>
</dbReference>
<dbReference type="GO" id="GO:0006412">
    <property type="term" value="P:translation"/>
    <property type="evidence" value="ECO:0007669"/>
    <property type="project" value="UniProtKB-UniRule"/>
</dbReference>
<dbReference type="Gene3D" id="1.20.58.110">
    <property type="entry name" value="Ribosomal protein S20"/>
    <property type="match status" value="1"/>
</dbReference>
<dbReference type="HAMAP" id="MF_00500">
    <property type="entry name" value="Ribosomal_bS20"/>
    <property type="match status" value="1"/>
</dbReference>
<dbReference type="InterPro" id="IPR002583">
    <property type="entry name" value="Ribosomal_bS20"/>
</dbReference>
<dbReference type="InterPro" id="IPR036510">
    <property type="entry name" value="Ribosomal_bS20_sf"/>
</dbReference>
<dbReference type="NCBIfam" id="TIGR00029">
    <property type="entry name" value="S20"/>
    <property type="match status" value="1"/>
</dbReference>
<dbReference type="PANTHER" id="PTHR33398">
    <property type="entry name" value="30S RIBOSOMAL PROTEIN S20"/>
    <property type="match status" value="1"/>
</dbReference>
<dbReference type="PANTHER" id="PTHR33398:SF1">
    <property type="entry name" value="SMALL RIBOSOMAL SUBUNIT PROTEIN BS20C"/>
    <property type="match status" value="1"/>
</dbReference>
<dbReference type="Pfam" id="PF01649">
    <property type="entry name" value="Ribosomal_S20p"/>
    <property type="match status" value="1"/>
</dbReference>
<dbReference type="SUPFAM" id="SSF46992">
    <property type="entry name" value="Ribosomal protein S20"/>
    <property type="match status" value="1"/>
</dbReference>
<protein>
    <recommendedName>
        <fullName evidence="1">Small ribosomal subunit protein bS20</fullName>
    </recommendedName>
    <alternativeName>
        <fullName evidence="2">30S ribosomal protein S20</fullName>
    </alternativeName>
</protein>
<reference key="1">
    <citation type="journal article" date="2004" name="Proc. Natl. Acad. Sci. U.S.A.">
        <title>Complete genomes of two clinical Staphylococcus aureus strains: evidence for the rapid evolution of virulence and drug resistance.</title>
        <authorList>
            <person name="Holden M.T.G."/>
            <person name="Feil E.J."/>
            <person name="Lindsay J.A."/>
            <person name="Peacock S.J."/>
            <person name="Day N.P.J."/>
            <person name="Enright M.C."/>
            <person name="Foster T.J."/>
            <person name="Moore C.E."/>
            <person name="Hurst L."/>
            <person name="Atkin R."/>
            <person name="Barron A."/>
            <person name="Bason N."/>
            <person name="Bentley S.D."/>
            <person name="Chillingworth C."/>
            <person name="Chillingworth T."/>
            <person name="Churcher C."/>
            <person name="Clark L."/>
            <person name="Corton C."/>
            <person name="Cronin A."/>
            <person name="Doggett J."/>
            <person name="Dowd L."/>
            <person name="Feltwell T."/>
            <person name="Hance Z."/>
            <person name="Harris B."/>
            <person name="Hauser H."/>
            <person name="Holroyd S."/>
            <person name="Jagels K."/>
            <person name="James K.D."/>
            <person name="Lennard N."/>
            <person name="Line A."/>
            <person name="Mayes R."/>
            <person name="Moule S."/>
            <person name="Mungall K."/>
            <person name="Ormond D."/>
            <person name="Quail M.A."/>
            <person name="Rabbinowitsch E."/>
            <person name="Rutherford K.M."/>
            <person name="Sanders M."/>
            <person name="Sharp S."/>
            <person name="Simmonds M."/>
            <person name="Stevens K."/>
            <person name="Whitehead S."/>
            <person name="Barrell B.G."/>
            <person name="Spratt B.G."/>
            <person name="Parkhill J."/>
        </authorList>
    </citation>
    <scope>NUCLEOTIDE SEQUENCE [LARGE SCALE GENOMIC DNA]</scope>
    <source>
        <strain>MRSA252</strain>
    </source>
</reference>